<accession>Q102R3</accession>
<organism>
    <name type="scientific">Dasypus novemcinctus</name>
    <name type="common">Nine-banded armadillo</name>
    <dbReference type="NCBI Taxonomy" id="9361"/>
    <lineage>
        <taxon>Eukaryota</taxon>
        <taxon>Metazoa</taxon>
        <taxon>Chordata</taxon>
        <taxon>Craniata</taxon>
        <taxon>Vertebrata</taxon>
        <taxon>Euteleostomi</taxon>
        <taxon>Mammalia</taxon>
        <taxon>Eutheria</taxon>
        <taxon>Xenarthra</taxon>
        <taxon>Cingulata</taxon>
        <taxon>Dasypodidae</taxon>
        <taxon>Dasypus</taxon>
    </lineage>
</organism>
<name>IL8_DASNO</name>
<reference key="1">
    <citation type="submission" date="2005-06" db="EMBL/GenBank/DDBJ databases">
        <title>Overexpression of Dasypus novemcinctus IL-8 in E. coli.</title>
        <authorList>
            <person name="Adams J.E."/>
        </authorList>
    </citation>
    <scope>NUCLEOTIDE SEQUENCE [MRNA]</scope>
</reference>
<gene>
    <name type="primary">CXCL8</name>
    <name type="synonym">IL8</name>
</gene>
<feature type="signal peptide" evidence="3">
    <location>
        <begin position="1"/>
        <end position="22"/>
    </location>
</feature>
<feature type="chain" id="PRO_0000253755" description="Interleukin-8">
    <location>
        <begin position="23"/>
        <end position="96"/>
    </location>
</feature>
<feature type="modified residue" description="Citrulline" evidence="1">
    <location>
        <position position="27"/>
    </location>
</feature>
<feature type="disulfide bond" evidence="1">
    <location>
        <begin position="34"/>
        <end position="61"/>
    </location>
</feature>
<feature type="disulfide bond" evidence="1">
    <location>
        <begin position="36"/>
        <end position="78"/>
    </location>
</feature>
<dbReference type="EMBL" id="DQ099902">
    <property type="protein sequence ID" value="AAZ76732.1"/>
    <property type="molecule type" value="mRNA"/>
</dbReference>
<dbReference type="RefSeq" id="NP_001268240.1">
    <property type="nucleotide sequence ID" value="NM_001281311.1"/>
</dbReference>
<dbReference type="SMR" id="Q102R3"/>
<dbReference type="GeneID" id="101441641"/>
<dbReference type="KEGG" id="dnm:101441641"/>
<dbReference type="CTD" id="3576"/>
<dbReference type="OrthoDB" id="9937393at2759"/>
<dbReference type="TreeFam" id="TF333433"/>
<dbReference type="GO" id="GO:0005615">
    <property type="term" value="C:extracellular space"/>
    <property type="evidence" value="ECO:0007669"/>
    <property type="project" value="UniProtKB-KW"/>
</dbReference>
<dbReference type="GO" id="GO:0008009">
    <property type="term" value="F:chemokine activity"/>
    <property type="evidence" value="ECO:0007669"/>
    <property type="project" value="InterPro"/>
</dbReference>
<dbReference type="GO" id="GO:0008201">
    <property type="term" value="F:heparin binding"/>
    <property type="evidence" value="ECO:0000250"/>
    <property type="project" value="UniProtKB"/>
</dbReference>
<dbReference type="GO" id="GO:0006955">
    <property type="term" value="P:immune response"/>
    <property type="evidence" value="ECO:0007669"/>
    <property type="project" value="InterPro"/>
</dbReference>
<dbReference type="GO" id="GO:0006954">
    <property type="term" value="P:inflammatory response"/>
    <property type="evidence" value="ECO:0007669"/>
    <property type="project" value="UniProtKB-KW"/>
</dbReference>
<dbReference type="GO" id="GO:0030593">
    <property type="term" value="P:neutrophil chemotaxis"/>
    <property type="evidence" value="ECO:0000250"/>
    <property type="project" value="UniProtKB"/>
</dbReference>
<dbReference type="CDD" id="cd00273">
    <property type="entry name" value="Chemokine_CXC"/>
    <property type="match status" value="1"/>
</dbReference>
<dbReference type="FunFam" id="2.40.50.40:FF:000004">
    <property type="entry name" value="C-X-C motif chemokine"/>
    <property type="match status" value="1"/>
</dbReference>
<dbReference type="Gene3D" id="2.40.50.40">
    <property type="match status" value="1"/>
</dbReference>
<dbReference type="InterPro" id="IPR039809">
    <property type="entry name" value="Chemokine_b/g/d"/>
</dbReference>
<dbReference type="InterPro" id="IPR001089">
    <property type="entry name" value="Chemokine_CXC"/>
</dbReference>
<dbReference type="InterPro" id="IPR018048">
    <property type="entry name" value="Chemokine_CXC_CS"/>
</dbReference>
<dbReference type="InterPro" id="IPR001811">
    <property type="entry name" value="Chemokine_IL8-like_dom"/>
</dbReference>
<dbReference type="InterPro" id="IPR033899">
    <property type="entry name" value="CXC_Chemokine_domain"/>
</dbReference>
<dbReference type="InterPro" id="IPR036048">
    <property type="entry name" value="Interleukin_8-like_sf"/>
</dbReference>
<dbReference type="PANTHER" id="PTHR12015:SF200">
    <property type="entry name" value="INTERLEUKIN-8"/>
    <property type="match status" value="1"/>
</dbReference>
<dbReference type="PANTHER" id="PTHR12015">
    <property type="entry name" value="SMALL INDUCIBLE CYTOKINE A"/>
    <property type="match status" value="1"/>
</dbReference>
<dbReference type="Pfam" id="PF00048">
    <property type="entry name" value="IL8"/>
    <property type="match status" value="1"/>
</dbReference>
<dbReference type="PRINTS" id="PR00436">
    <property type="entry name" value="INTERLEUKIN8"/>
</dbReference>
<dbReference type="PRINTS" id="PR00437">
    <property type="entry name" value="SMALLCYTKCXC"/>
</dbReference>
<dbReference type="SMART" id="SM00199">
    <property type="entry name" value="SCY"/>
    <property type="match status" value="1"/>
</dbReference>
<dbReference type="SUPFAM" id="SSF54117">
    <property type="entry name" value="Interleukin 8-like chemokines"/>
    <property type="match status" value="1"/>
</dbReference>
<dbReference type="PROSITE" id="PS00471">
    <property type="entry name" value="SMALL_CYTOKINES_CXC"/>
    <property type="match status" value="1"/>
</dbReference>
<keyword id="KW-0145">Chemotaxis</keyword>
<keyword id="KW-0164">Citrullination</keyword>
<keyword id="KW-0202">Cytokine</keyword>
<keyword id="KW-1015">Disulfide bond</keyword>
<keyword id="KW-0395">Inflammatory response</keyword>
<keyword id="KW-0964">Secreted</keyword>
<keyword id="KW-0732">Signal</keyword>
<sequence length="96" mass="10699">MTSKLAIALLATFMLSAALCEAAVLSRSGTELRCLCINTHSTYFHPRVIKELRVIESGPHCPNTEIMSVKLVNGAEVCLDPKQKWVQKVVELFLKR</sequence>
<comment type="function">
    <text evidence="2">Chemotactic factor that mediates inflammatory response by attracting neutrophils, basophils, and T-cells to clear pathogens and protect the host from infection. Also plays an important role in neutrophil activation. Released in response to an inflammatory stimulus, exerts its effect by binding to the G-protein-coupled receptors CXCR1 and CXCR2, primarily found in neutrophils, monocytes and endothelial cells. G-protein heterotrimer (alpha, beta, gamma subunits) constitutively binds to CXCR1/CXCR2 receptor and activation by IL8 leads to beta and gamma subunits release from Galpha (GNAI2 in neutrophils) and activation of several downstream signaling pathways including PI3K and MAPK pathways.</text>
</comment>
<comment type="subunit">
    <text evidence="2">Homodimer. Interacts with TNFAIP6 (via Link domain); this interaction interferes with chemokine binding to glycosaminoglycans.</text>
</comment>
<comment type="subcellular location">
    <subcellularLocation>
        <location>Secreted</location>
    </subcellularLocation>
</comment>
<comment type="PTM">
    <text evidence="1">Citrullination at Arg-27 prevents proteolysis, and dampens tissue inflammation, it also enhances leukocytosis, possibly through impaired chemokine clearance from the blood circulation.</text>
</comment>
<comment type="similarity">
    <text evidence="4">Belongs to the intercrine alpha (chemokine CxC) family.</text>
</comment>
<proteinExistence type="inferred from homology"/>
<evidence type="ECO:0000250" key="1"/>
<evidence type="ECO:0000250" key="2">
    <source>
        <dbReference type="UniProtKB" id="P10145"/>
    </source>
</evidence>
<evidence type="ECO:0000255" key="3"/>
<evidence type="ECO:0000305" key="4"/>
<protein>
    <recommendedName>
        <fullName>Interleukin-8</fullName>
        <shortName>IL-8</shortName>
    </recommendedName>
    <alternativeName>
        <fullName>C-X-C motif chemokine 8</fullName>
    </alternativeName>
    <alternativeName>
        <fullName>Chemokine (C-X-C motif) ligand 8</fullName>
    </alternativeName>
</protein>